<protein>
    <recommendedName>
        <fullName evidence="1">Chromosomal replication initiator protein DnaA</fullName>
    </recommendedName>
</protein>
<organism>
    <name type="scientific">Shewanella baltica (strain OS155 / ATCC BAA-1091)</name>
    <dbReference type="NCBI Taxonomy" id="325240"/>
    <lineage>
        <taxon>Bacteria</taxon>
        <taxon>Pseudomonadati</taxon>
        <taxon>Pseudomonadota</taxon>
        <taxon>Gammaproteobacteria</taxon>
        <taxon>Alteromonadales</taxon>
        <taxon>Shewanellaceae</taxon>
        <taxon>Shewanella</taxon>
    </lineage>
</organism>
<feature type="chain" id="PRO_1000048716" description="Chromosomal replication initiator protein DnaA">
    <location>
        <begin position="1"/>
        <end position="462"/>
    </location>
</feature>
<feature type="region of interest" description="Domain I, interacts with DnaA modulators" evidence="1">
    <location>
        <begin position="1"/>
        <end position="84"/>
    </location>
</feature>
<feature type="region of interest" description="Domain II" evidence="1">
    <location>
        <begin position="84"/>
        <end position="125"/>
    </location>
</feature>
<feature type="region of interest" description="Domain III, AAA+ region" evidence="1">
    <location>
        <begin position="126"/>
        <end position="342"/>
    </location>
</feature>
<feature type="region of interest" description="Domain IV, binds dsDNA" evidence="1">
    <location>
        <begin position="343"/>
        <end position="462"/>
    </location>
</feature>
<feature type="binding site" evidence="1">
    <location>
        <position position="170"/>
    </location>
    <ligand>
        <name>ATP</name>
        <dbReference type="ChEBI" id="CHEBI:30616"/>
    </ligand>
</feature>
<feature type="binding site" evidence="1">
    <location>
        <position position="172"/>
    </location>
    <ligand>
        <name>ATP</name>
        <dbReference type="ChEBI" id="CHEBI:30616"/>
    </ligand>
</feature>
<feature type="binding site" evidence="1">
    <location>
        <position position="173"/>
    </location>
    <ligand>
        <name>ATP</name>
        <dbReference type="ChEBI" id="CHEBI:30616"/>
    </ligand>
</feature>
<feature type="binding site" evidence="1">
    <location>
        <position position="174"/>
    </location>
    <ligand>
        <name>ATP</name>
        <dbReference type="ChEBI" id="CHEBI:30616"/>
    </ligand>
</feature>
<name>DNAA_SHEB5</name>
<proteinExistence type="inferred from homology"/>
<evidence type="ECO:0000255" key="1">
    <source>
        <dbReference type="HAMAP-Rule" id="MF_00377"/>
    </source>
</evidence>
<comment type="function">
    <text evidence="1">Plays an essential role in the initiation and regulation of chromosomal replication. ATP-DnaA binds to the origin of replication (oriC) to initiate formation of the DNA replication initiation complex once per cell cycle. Binds the DnaA box (a 9 base pair repeat at the origin) and separates the double-stranded (ds)DNA. Forms a right-handed helical filament on oriC DNA; dsDNA binds to the exterior of the filament while single-stranded (ss)DNA is stabiized in the filament's interior. The ATP-DnaA-oriC complex binds and stabilizes one strand of the AT-rich DNA unwinding element (DUE), permitting loading of DNA polymerase. After initiation quickly degrades to an ADP-DnaA complex that is not apt for DNA replication. Binds acidic phospholipids.</text>
</comment>
<comment type="subunit">
    <text evidence="1">Oligomerizes as a right-handed, spiral filament on DNA at oriC.</text>
</comment>
<comment type="subcellular location">
    <subcellularLocation>
        <location evidence="1">Cytoplasm</location>
    </subcellularLocation>
</comment>
<comment type="domain">
    <text evidence="1">Domain I is involved in oligomerization and binding regulators, domain II is flexibile and of varying length in different bacteria, domain III forms the AAA+ region, while domain IV binds dsDNA.</text>
</comment>
<comment type="similarity">
    <text evidence="1">Belongs to the DnaA family.</text>
</comment>
<keyword id="KW-0067">ATP-binding</keyword>
<keyword id="KW-0963">Cytoplasm</keyword>
<keyword id="KW-0235">DNA replication</keyword>
<keyword id="KW-0238">DNA-binding</keyword>
<keyword id="KW-0446">Lipid-binding</keyword>
<keyword id="KW-0547">Nucleotide-binding</keyword>
<keyword id="KW-1185">Reference proteome</keyword>
<sequence length="462" mass="52175">MAVSLWQQCIGRLQDELSAQQFSMWIRPLQAEMDGDTLVLYAPNRFVLDWVRDKYINIINQFFTEQMGSDAPKLRFDIGSRPSAKKPSVPAPIAPTRVANTQTKATVGTTFNVQAEPMANANHRSNINPSYQFDNFVEGKSNQLGKAAALQVAENPGGAYNPLFLYGGTGLGKTHLLHAVGNGIIKNNPNAKVVYMHSERFVQDMVKALQNNAIEEFKRYYRSVDALFIDDIQFFANKDRSQEEFFHTFNALLEGNHQIILTSDRYPKEIDGVEDRLKSRFGWGLTVAIEPPELETRVAILMRKAQESGINLPDEVAFFIAKRLRSNVRELEGALNRVIANANFTGRPITIDFVREALRDLLALQEKLVTIDNIQKTVAEYYKIKMADMLSKRRSRSVARPRQVAMALSKELTNQSLPEIGDAFGGRDHTTVLHACRKIAQLREESHDIKEDYANLIRTLSS</sequence>
<gene>
    <name evidence="1" type="primary">dnaA</name>
    <name type="ordered locus">Sbal_0001</name>
</gene>
<dbReference type="EMBL" id="CP000563">
    <property type="protein sequence ID" value="ABN59538.1"/>
    <property type="molecule type" value="Genomic_DNA"/>
</dbReference>
<dbReference type="RefSeq" id="WP_006083826.1">
    <property type="nucleotide sequence ID" value="NC_009052.1"/>
</dbReference>
<dbReference type="SMR" id="A3CYH5"/>
<dbReference type="STRING" id="325240.Sbal_0001"/>
<dbReference type="GeneID" id="11774105"/>
<dbReference type="KEGG" id="sbl:Sbal_0001"/>
<dbReference type="HOGENOM" id="CLU_026910_0_1_6"/>
<dbReference type="OrthoDB" id="9807019at2"/>
<dbReference type="Proteomes" id="UP000001557">
    <property type="component" value="Chromosome"/>
</dbReference>
<dbReference type="GO" id="GO:0005737">
    <property type="term" value="C:cytoplasm"/>
    <property type="evidence" value="ECO:0007669"/>
    <property type="project" value="UniProtKB-SubCell"/>
</dbReference>
<dbReference type="GO" id="GO:0005886">
    <property type="term" value="C:plasma membrane"/>
    <property type="evidence" value="ECO:0007669"/>
    <property type="project" value="TreeGrafter"/>
</dbReference>
<dbReference type="GO" id="GO:0005524">
    <property type="term" value="F:ATP binding"/>
    <property type="evidence" value="ECO:0007669"/>
    <property type="project" value="UniProtKB-UniRule"/>
</dbReference>
<dbReference type="GO" id="GO:0016887">
    <property type="term" value="F:ATP hydrolysis activity"/>
    <property type="evidence" value="ECO:0007669"/>
    <property type="project" value="InterPro"/>
</dbReference>
<dbReference type="GO" id="GO:0003688">
    <property type="term" value="F:DNA replication origin binding"/>
    <property type="evidence" value="ECO:0007669"/>
    <property type="project" value="UniProtKB-UniRule"/>
</dbReference>
<dbReference type="GO" id="GO:0008289">
    <property type="term" value="F:lipid binding"/>
    <property type="evidence" value="ECO:0007669"/>
    <property type="project" value="UniProtKB-KW"/>
</dbReference>
<dbReference type="GO" id="GO:0006270">
    <property type="term" value="P:DNA replication initiation"/>
    <property type="evidence" value="ECO:0007669"/>
    <property type="project" value="UniProtKB-UniRule"/>
</dbReference>
<dbReference type="GO" id="GO:0006275">
    <property type="term" value="P:regulation of DNA replication"/>
    <property type="evidence" value="ECO:0007669"/>
    <property type="project" value="UniProtKB-UniRule"/>
</dbReference>
<dbReference type="CDD" id="cd00009">
    <property type="entry name" value="AAA"/>
    <property type="match status" value="1"/>
</dbReference>
<dbReference type="CDD" id="cd06571">
    <property type="entry name" value="Bac_DnaA_C"/>
    <property type="match status" value="1"/>
</dbReference>
<dbReference type="FunFam" id="1.10.1750.10:FF:000001">
    <property type="entry name" value="Chromosomal replication initiator protein DnaA"/>
    <property type="match status" value="1"/>
</dbReference>
<dbReference type="FunFam" id="1.10.8.60:FF:000003">
    <property type="entry name" value="Chromosomal replication initiator protein DnaA"/>
    <property type="match status" value="1"/>
</dbReference>
<dbReference type="FunFam" id="3.30.300.180:FF:000001">
    <property type="entry name" value="Chromosomal replication initiator protein DnaA"/>
    <property type="match status" value="1"/>
</dbReference>
<dbReference type="FunFam" id="3.40.50.300:FF:000103">
    <property type="entry name" value="Chromosomal replication initiator protein DnaA"/>
    <property type="match status" value="1"/>
</dbReference>
<dbReference type="Gene3D" id="1.10.1750.10">
    <property type="match status" value="1"/>
</dbReference>
<dbReference type="Gene3D" id="1.10.8.60">
    <property type="match status" value="1"/>
</dbReference>
<dbReference type="Gene3D" id="3.30.300.180">
    <property type="match status" value="1"/>
</dbReference>
<dbReference type="Gene3D" id="3.40.50.300">
    <property type="entry name" value="P-loop containing nucleotide triphosphate hydrolases"/>
    <property type="match status" value="1"/>
</dbReference>
<dbReference type="HAMAP" id="MF_00377">
    <property type="entry name" value="DnaA_bact"/>
    <property type="match status" value="1"/>
</dbReference>
<dbReference type="InterPro" id="IPR003593">
    <property type="entry name" value="AAA+_ATPase"/>
</dbReference>
<dbReference type="InterPro" id="IPR001957">
    <property type="entry name" value="Chromosome_initiator_DnaA"/>
</dbReference>
<dbReference type="InterPro" id="IPR020591">
    <property type="entry name" value="Chromosome_initiator_DnaA-like"/>
</dbReference>
<dbReference type="InterPro" id="IPR018312">
    <property type="entry name" value="Chromosome_initiator_DnaA_CS"/>
</dbReference>
<dbReference type="InterPro" id="IPR013159">
    <property type="entry name" value="DnaA_C"/>
</dbReference>
<dbReference type="InterPro" id="IPR013317">
    <property type="entry name" value="DnaA_dom"/>
</dbReference>
<dbReference type="InterPro" id="IPR024633">
    <property type="entry name" value="DnaA_N_dom"/>
</dbReference>
<dbReference type="InterPro" id="IPR038454">
    <property type="entry name" value="DnaA_N_sf"/>
</dbReference>
<dbReference type="InterPro" id="IPR055199">
    <property type="entry name" value="Hda_lid"/>
</dbReference>
<dbReference type="InterPro" id="IPR027417">
    <property type="entry name" value="P-loop_NTPase"/>
</dbReference>
<dbReference type="InterPro" id="IPR010921">
    <property type="entry name" value="Trp_repressor/repl_initiator"/>
</dbReference>
<dbReference type="NCBIfam" id="TIGR00362">
    <property type="entry name" value="DnaA"/>
    <property type="match status" value="1"/>
</dbReference>
<dbReference type="PANTHER" id="PTHR30050">
    <property type="entry name" value="CHROMOSOMAL REPLICATION INITIATOR PROTEIN DNAA"/>
    <property type="match status" value="1"/>
</dbReference>
<dbReference type="PANTHER" id="PTHR30050:SF2">
    <property type="entry name" value="CHROMOSOMAL REPLICATION INITIATOR PROTEIN DNAA"/>
    <property type="match status" value="1"/>
</dbReference>
<dbReference type="Pfam" id="PF00308">
    <property type="entry name" value="Bac_DnaA"/>
    <property type="match status" value="1"/>
</dbReference>
<dbReference type="Pfam" id="PF08299">
    <property type="entry name" value="Bac_DnaA_C"/>
    <property type="match status" value="1"/>
</dbReference>
<dbReference type="Pfam" id="PF11638">
    <property type="entry name" value="DnaA_N"/>
    <property type="match status" value="1"/>
</dbReference>
<dbReference type="Pfam" id="PF22688">
    <property type="entry name" value="Hda_lid"/>
    <property type="match status" value="1"/>
</dbReference>
<dbReference type="PRINTS" id="PR00051">
    <property type="entry name" value="DNAA"/>
</dbReference>
<dbReference type="SMART" id="SM00382">
    <property type="entry name" value="AAA"/>
    <property type="match status" value="1"/>
</dbReference>
<dbReference type="SMART" id="SM00760">
    <property type="entry name" value="Bac_DnaA_C"/>
    <property type="match status" value="1"/>
</dbReference>
<dbReference type="SUPFAM" id="SSF52540">
    <property type="entry name" value="P-loop containing nucleoside triphosphate hydrolases"/>
    <property type="match status" value="1"/>
</dbReference>
<dbReference type="SUPFAM" id="SSF48295">
    <property type="entry name" value="TrpR-like"/>
    <property type="match status" value="1"/>
</dbReference>
<dbReference type="PROSITE" id="PS01008">
    <property type="entry name" value="DNAA"/>
    <property type="match status" value="1"/>
</dbReference>
<reference key="1">
    <citation type="submission" date="2007-02" db="EMBL/GenBank/DDBJ databases">
        <title>Complete sequence of chromosome of Shewanella baltica OS155.</title>
        <authorList>
            <consortium name="US DOE Joint Genome Institute"/>
            <person name="Copeland A."/>
            <person name="Lucas S."/>
            <person name="Lapidus A."/>
            <person name="Barry K."/>
            <person name="Detter J.C."/>
            <person name="Glavina del Rio T."/>
            <person name="Hammon N."/>
            <person name="Israni S."/>
            <person name="Dalin E."/>
            <person name="Tice H."/>
            <person name="Pitluck S."/>
            <person name="Sims D.R."/>
            <person name="Brettin T."/>
            <person name="Bruce D."/>
            <person name="Han C."/>
            <person name="Tapia R."/>
            <person name="Brainard J."/>
            <person name="Schmutz J."/>
            <person name="Larimer F."/>
            <person name="Land M."/>
            <person name="Hauser L."/>
            <person name="Kyrpides N."/>
            <person name="Mikhailova N."/>
            <person name="Brettar I."/>
            <person name="Klappenbach J."/>
            <person name="Konstantinidis K."/>
            <person name="Rodrigues J."/>
            <person name="Tiedje J."/>
            <person name="Richardson P."/>
        </authorList>
    </citation>
    <scope>NUCLEOTIDE SEQUENCE [LARGE SCALE GENOMIC DNA]</scope>
    <source>
        <strain>OS155 / ATCC BAA-1091</strain>
    </source>
</reference>
<accession>A3CYH5</accession>